<accession>Q54D67</accession>
<keyword id="KW-0479">Metal-binding</keyword>
<keyword id="KW-0489">Methyltransferase</keyword>
<keyword id="KW-1185">Reference proteome</keyword>
<keyword id="KW-0949">S-adenosyl-L-methionine</keyword>
<keyword id="KW-0808">Transferase</keyword>
<keyword id="KW-0862">Zinc</keyword>
<keyword id="KW-0863">Zinc-finger</keyword>
<sequence length="343" mass="39971">MNKILIRNFCTNIKNESTKPLIDNIYKNILKDNFKIVEIKDCKNNRGLFYNPIESPTQTLSVINPKTNKPNLIFKEEPFISYPSIIKSNENICNHCLKEIKKEEEEIKQECEECKVYKYCSIECKEKSSIEYHSVLCKSTGSGFNYLEKHASIEKRRFPLLAGKILARMIMGYHLEKSSKSTWLPLQMLSFAKKPPPLEWKDDYLIFSRSLLKGINNESMKKKFDYDWFVRVMQILYLNTIGIDIDPNQQSTKMSSPESGIGLYLLTSFINHDCDPNAFIHFPDDHTMHLSPLKPINPGDEITISYTDTTKDLVDRRSQLFENYGFNCECKKCLNDLLIKRNK</sequence>
<name>Y2454_DICDI</name>
<protein>
    <recommendedName>
        <fullName>SET and MYND domain-containing protein DDB_G0292454</fullName>
        <ecNumber>2.1.1.-</ecNumber>
    </recommendedName>
</protein>
<gene>
    <name type="ORF">DDB_G0292454</name>
</gene>
<evidence type="ECO:0000250" key="1"/>
<evidence type="ECO:0000255" key="2">
    <source>
        <dbReference type="PROSITE-ProRule" id="PRU00134"/>
    </source>
</evidence>
<evidence type="ECO:0000255" key="3">
    <source>
        <dbReference type="PROSITE-ProRule" id="PRU00190"/>
    </source>
</evidence>
<organism>
    <name type="scientific">Dictyostelium discoideum</name>
    <name type="common">Social amoeba</name>
    <dbReference type="NCBI Taxonomy" id="44689"/>
    <lineage>
        <taxon>Eukaryota</taxon>
        <taxon>Amoebozoa</taxon>
        <taxon>Evosea</taxon>
        <taxon>Eumycetozoa</taxon>
        <taxon>Dictyostelia</taxon>
        <taxon>Dictyosteliales</taxon>
        <taxon>Dictyosteliaceae</taxon>
        <taxon>Dictyostelium</taxon>
    </lineage>
</organism>
<feature type="chain" id="PRO_0000389437" description="SET and MYND domain-containing protein DDB_G0292454">
    <location>
        <begin position="1"/>
        <end position="343"/>
    </location>
</feature>
<feature type="domain" description="SET" evidence="3">
    <location>
        <begin position="77"/>
        <end position="307"/>
    </location>
</feature>
<feature type="zinc finger region" description="MYND-type" evidence="2">
    <location>
        <begin position="93"/>
        <end position="137"/>
    </location>
</feature>
<feature type="binding site" evidence="2">
    <location>
        <position position="93"/>
    </location>
    <ligand>
        <name>Zn(2+)</name>
        <dbReference type="ChEBI" id="CHEBI:29105"/>
        <label>1</label>
    </ligand>
</feature>
<feature type="binding site" evidence="2">
    <location>
        <position position="96"/>
    </location>
    <ligand>
        <name>Zn(2+)</name>
        <dbReference type="ChEBI" id="CHEBI:29105"/>
        <label>1</label>
    </ligand>
</feature>
<feature type="binding site" evidence="2">
    <location>
        <position position="111"/>
    </location>
    <ligand>
        <name>Zn(2+)</name>
        <dbReference type="ChEBI" id="CHEBI:29105"/>
        <label>2</label>
    </ligand>
</feature>
<feature type="binding site" evidence="2">
    <location>
        <position position="114"/>
    </location>
    <ligand>
        <name>Zn(2+)</name>
        <dbReference type="ChEBI" id="CHEBI:29105"/>
        <label>2</label>
    </ligand>
</feature>
<feature type="binding site" evidence="2">
    <location>
        <position position="120"/>
    </location>
    <ligand>
        <name>Zn(2+)</name>
        <dbReference type="ChEBI" id="CHEBI:29105"/>
        <label>1</label>
    </ligand>
</feature>
<feature type="binding site" evidence="2">
    <location>
        <position position="124"/>
    </location>
    <ligand>
        <name>Zn(2+)</name>
        <dbReference type="ChEBI" id="CHEBI:29105"/>
        <label>1</label>
    </ligand>
</feature>
<feature type="binding site" evidence="2">
    <location>
        <position position="133"/>
    </location>
    <ligand>
        <name>Zn(2+)</name>
        <dbReference type="ChEBI" id="CHEBI:29105"/>
        <label>2</label>
    </ligand>
</feature>
<feature type="binding site" evidence="2">
    <location>
        <position position="137"/>
    </location>
    <ligand>
        <name>Zn(2+)</name>
        <dbReference type="ChEBI" id="CHEBI:29105"/>
        <label>2</label>
    </ligand>
</feature>
<comment type="function">
    <text evidence="1">Probable methyltransferase.</text>
</comment>
<comment type="similarity">
    <text evidence="3">Belongs to the class V-like SAM-binding methyltransferase superfamily.</text>
</comment>
<dbReference type="EC" id="2.1.1.-"/>
<dbReference type="EMBL" id="AAFI02000190">
    <property type="protein sequence ID" value="EAL61206.1"/>
    <property type="molecule type" value="Genomic_DNA"/>
</dbReference>
<dbReference type="RefSeq" id="XP_629629.1">
    <property type="nucleotide sequence ID" value="XM_629627.1"/>
</dbReference>
<dbReference type="SMR" id="Q54D67"/>
<dbReference type="FunCoup" id="Q54D67">
    <property type="interactions" value="94"/>
</dbReference>
<dbReference type="PaxDb" id="44689-DDB0220712"/>
<dbReference type="EnsemblProtists" id="EAL61206">
    <property type="protein sequence ID" value="EAL61206"/>
    <property type="gene ID" value="DDB_G0292454"/>
</dbReference>
<dbReference type="GeneID" id="8628693"/>
<dbReference type="KEGG" id="ddi:DDB_G0292454"/>
<dbReference type="dictyBase" id="DDB_G0292454"/>
<dbReference type="VEuPathDB" id="AmoebaDB:DDB_G0292454"/>
<dbReference type="eggNOG" id="KOG2084">
    <property type="taxonomic scope" value="Eukaryota"/>
</dbReference>
<dbReference type="HOGENOM" id="CLU_809942_0_0_1"/>
<dbReference type="InParanoid" id="Q54D67"/>
<dbReference type="OMA" id="LMAMYQQ"/>
<dbReference type="PhylomeDB" id="Q54D67"/>
<dbReference type="Reactome" id="R-DDI-3214841">
    <property type="pathway name" value="PKMTs methylate histone lysines"/>
</dbReference>
<dbReference type="PRO" id="PR:Q54D67"/>
<dbReference type="Proteomes" id="UP000002195">
    <property type="component" value="Chromosome 6"/>
</dbReference>
<dbReference type="GO" id="GO:0005634">
    <property type="term" value="C:nucleus"/>
    <property type="evidence" value="ECO:0000318"/>
    <property type="project" value="GO_Central"/>
</dbReference>
<dbReference type="GO" id="GO:0008168">
    <property type="term" value="F:methyltransferase activity"/>
    <property type="evidence" value="ECO:0007669"/>
    <property type="project" value="UniProtKB-KW"/>
</dbReference>
<dbReference type="GO" id="GO:0008270">
    <property type="term" value="F:zinc ion binding"/>
    <property type="evidence" value="ECO:0007669"/>
    <property type="project" value="UniProtKB-KW"/>
</dbReference>
<dbReference type="GO" id="GO:0032259">
    <property type="term" value="P:methylation"/>
    <property type="evidence" value="ECO:0007669"/>
    <property type="project" value="UniProtKB-KW"/>
</dbReference>
<dbReference type="CDD" id="cd20071">
    <property type="entry name" value="SET_SMYD"/>
    <property type="match status" value="1"/>
</dbReference>
<dbReference type="Gene3D" id="1.10.220.160">
    <property type="match status" value="1"/>
</dbReference>
<dbReference type="Gene3D" id="6.10.140.2220">
    <property type="match status" value="1"/>
</dbReference>
<dbReference type="Gene3D" id="2.170.270.10">
    <property type="entry name" value="SET domain"/>
    <property type="match status" value="1"/>
</dbReference>
<dbReference type="InterPro" id="IPR001214">
    <property type="entry name" value="SET_dom"/>
</dbReference>
<dbReference type="InterPro" id="IPR046341">
    <property type="entry name" value="SET_dom_sf"/>
</dbReference>
<dbReference type="InterPro" id="IPR002893">
    <property type="entry name" value="Znf_MYND"/>
</dbReference>
<dbReference type="PANTHER" id="PTHR46402:SF2">
    <property type="entry name" value="HISTONE-LYSINE N-TRIMETHYLTRANSFERASE SMYD5"/>
    <property type="match status" value="1"/>
</dbReference>
<dbReference type="PANTHER" id="PTHR46402">
    <property type="entry name" value="SET AND MYND DOMAIN-CONTAINING PROTEIN 5"/>
    <property type="match status" value="1"/>
</dbReference>
<dbReference type="Pfam" id="PF00856">
    <property type="entry name" value="SET"/>
    <property type="match status" value="1"/>
</dbReference>
<dbReference type="SUPFAM" id="SSF144232">
    <property type="entry name" value="HIT/MYND zinc finger-like"/>
    <property type="match status" value="1"/>
</dbReference>
<dbReference type="SUPFAM" id="SSF82199">
    <property type="entry name" value="SET domain"/>
    <property type="match status" value="1"/>
</dbReference>
<dbReference type="PROSITE" id="PS50280">
    <property type="entry name" value="SET"/>
    <property type="match status" value="1"/>
</dbReference>
<dbReference type="PROSITE" id="PS01360">
    <property type="entry name" value="ZF_MYND_1"/>
    <property type="match status" value="1"/>
</dbReference>
<dbReference type="PROSITE" id="PS50865">
    <property type="entry name" value="ZF_MYND_2"/>
    <property type="match status" value="1"/>
</dbReference>
<reference key="1">
    <citation type="journal article" date="2005" name="Nature">
        <title>The genome of the social amoeba Dictyostelium discoideum.</title>
        <authorList>
            <person name="Eichinger L."/>
            <person name="Pachebat J.A."/>
            <person name="Gloeckner G."/>
            <person name="Rajandream M.A."/>
            <person name="Sucgang R."/>
            <person name="Berriman M."/>
            <person name="Song J."/>
            <person name="Olsen R."/>
            <person name="Szafranski K."/>
            <person name="Xu Q."/>
            <person name="Tunggal B."/>
            <person name="Kummerfeld S."/>
            <person name="Madera M."/>
            <person name="Konfortov B.A."/>
            <person name="Rivero F."/>
            <person name="Bankier A.T."/>
            <person name="Lehmann R."/>
            <person name="Hamlin N."/>
            <person name="Davies R."/>
            <person name="Gaudet P."/>
            <person name="Fey P."/>
            <person name="Pilcher K."/>
            <person name="Chen G."/>
            <person name="Saunders D."/>
            <person name="Sodergren E.J."/>
            <person name="Davis P."/>
            <person name="Kerhornou A."/>
            <person name="Nie X."/>
            <person name="Hall N."/>
            <person name="Anjard C."/>
            <person name="Hemphill L."/>
            <person name="Bason N."/>
            <person name="Farbrother P."/>
            <person name="Desany B."/>
            <person name="Just E."/>
            <person name="Morio T."/>
            <person name="Rost R."/>
            <person name="Churcher C.M."/>
            <person name="Cooper J."/>
            <person name="Haydock S."/>
            <person name="van Driessche N."/>
            <person name="Cronin A."/>
            <person name="Goodhead I."/>
            <person name="Muzny D.M."/>
            <person name="Mourier T."/>
            <person name="Pain A."/>
            <person name="Lu M."/>
            <person name="Harper D."/>
            <person name="Lindsay R."/>
            <person name="Hauser H."/>
            <person name="James K.D."/>
            <person name="Quiles M."/>
            <person name="Madan Babu M."/>
            <person name="Saito T."/>
            <person name="Buchrieser C."/>
            <person name="Wardroper A."/>
            <person name="Felder M."/>
            <person name="Thangavelu M."/>
            <person name="Johnson D."/>
            <person name="Knights A."/>
            <person name="Loulseged H."/>
            <person name="Mungall K.L."/>
            <person name="Oliver K."/>
            <person name="Price C."/>
            <person name="Quail M.A."/>
            <person name="Urushihara H."/>
            <person name="Hernandez J."/>
            <person name="Rabbinowitsch E."/>
            <person name="Steffen D."/>
            <person name="Sanders M."/>
            <person name="Ma J."/>
            <person name="Kohara Y."/>
            <person name="Sharp S."/>
            <person name="Simmonds M.N."/>
            <person name="Spiegler S."/>
            <person name="Tivey A."/>
            <person name="Sugano S."/>
            <person name="White B."/>
            <person name="Walker D."/>
            <person name="Woodward J.R."/>
            <person name="Winckler T."/>
            <person name="Tanaka Y."/>
            <person name="Shaulsky G."/>
            <person name="Schleicher M."/>
            <person name="Weinstock G.M."/>
            <person name="Rosenthal A."/>
            <person name="Cox E.C."/>
            <person name="Chisholm R.L."/>
            <person name="Gibbs R.A."/>
            <person name="Loomis W.F."/>
            <person name="Platzer M."/>
            <person name="Kay R.R."/>
            <person name="Williams J.G."/>
            <person name="Dear P.H."/>
            <person name="Noegel A.A."/>
            <person name="Barrell B.G."/>
            <person name="Kuspa A."/>
        </authorList>
    </citation>
    <scope>NUCLEOTIDE SEQUENCE [LARGE SCALE GENOMIC DNA]</scope>
    <source>
        <strain>AX4</strain>
    </source>
</reference>
<proteinExistence type="inferred from homology"/>